<reference key="1">
    <citation type="journal article" date="2016" name="Stand. Genomic Sci.">
        <title>Complete genome sequence of Methanospirillum hungatei type strain JF1.</title>
        <authorList>
            <person name="Gunsalus R.P."/>
            <person name="Cook L.E."/>
            <person name="Crable B."/>
            <person name="Rohlin L."/>
            <person name="McDonald E."/>
            <person name="Mouttaki H."/>
            <person name="Sieber J.R."/>
            <person name="Poweleit N."/>
            <person name="Zhou H."/>
            <person name="Lapidus A.L."/>
            <person name="Daligault H.E."/>
            <person name="Land M."/>
            <person name="Gilna P."/>
            <person name="Ivanova N."/>
            <person name="Kyrpides N."/>
            <person name="Culley D.E."/>
            <person name="McInerney M.J."/>
        </authorList>
    </citation>
    <scope>NUCLEOTIDE SEQUENCE [LARGE SCALE GENOMIC DNA]</scope>
    <source>
        <strain>ATCC 27890 / DSM 864 / NBRC 100397 / JF-1</strain>
    </source>
</reference>
<dbReference type="EC" id="4.2.1.147" evidence="1"/>
<dbReference type="EC" id="4.1.2.43" evidence="1"/>
<dbReference type="EMBL" id="CP000254">
    <property type="protein sequence ID" value="ABD41359.1"/>
    <property type="molecule type" value="Genomic_DNA"/>
</dbReference>
<dbReference type="RefSeq" id="WP_011448624.1">
    <property type="nucleotide sequence ID" value="NC_007796.1"/>
</dbReference>
<dbReference type="SMR" id="Q2FQ74"/>
<dbReference type="FunCoup" id="Q2FQ74">
    <property type="interactions" value="120"/>
</dbReference>
<dbReference type="STRING" id="323259.Mhun_1628"/>
<dbReference type="EnsemblBacteria" id="ABD41359">
    <property type="protein sequence ID" value="ABD41359"/>
    <property type="gene ID" value="Mhun_1628"/>
</dbReference>
<dbReference type="GeneID" id="3924370"/>
<dbReference type="KEGG" id="mhu:Mhun_1628"/>
<dbReference type="eggNOG" id="arCOG00103">
    <property type="taxonomic scope" value="Archaea"/>
</dbReference>
<dbReference type="HOGENOM" id="CLU_701335_0_0_2"/>
<dbReference type="InParanoid" id="Q2FQ74"/>
<dbReference type="OrthoDB" id="64276at2157"/>
<dbReference type="UniPathway" id="UPA00293"/>
<dbReference type="Proteomes" id="UP000001941">
    <property type="component" value="Chromosome"/>
</dbReference>
<dbReference type="GO" id="GO:0033982">
    <property type="term" value="F:3-dehydro-L-gulonate-6-phosphate decarboxylase activity"/>
    <property type="evidence" value="ECO:0007669"/>
    <property type="project" value="TreeGrafter"/>
</dbReference>
<dbReference type="GO" id="GO:0016840">
    <property type="term" value="F:carbon-nitrogen lyase activity"/>
    <property type="evidence" value="ECO:0007669"/>
    <property type="project" value="InterPro"/>
</dbReference>
<dbReference type="GO" id="GO:0043801">
    <property type="term" value="F:hexulose-6-phosphate synthase activity"/>
    <property type="evidence" value="ECO:0007669"/>
    <property type="project" value="UniProtKB-UniRule"/>
</dbReference>
<dbReference type="GO" id="GO:0016836">
    <property type="term" value="F:hydro-lyase activity"/>
    <property type="evidence" value="ECO:0007669"/>
    <property type="project" value="UniProtKB-UniRule"/>
</dbReference>
<dbReference type="GO" id="GO:0004590">
    <property type="term" value="F:orotidine-5'-phosphate decarboxylase activity"/>
    <property type="evidence" value="ECO:0007669"/>
    <property type="project" value="InterPro"/>
</dbReference>
<dbReference type="GO" id="GO:0006207">
    <property type="term" value="P:'de novo' pyrimidine nucleobase biosynthetic process"/>
    <property type="evidence" value="ECO:0007669"/>
    <property type="project" value="InterPro"/>
</dbReference>
<dbReference type="GO" id="GO:0016051">
    <property type="term" value="P:carbohydrate biosynthetic process"/>
    <property type="evidence" value="ECO:0007669"/>
    <property type="project" value="UniProtKB-UniRule"/>
</dbReference>
<dbReference type="GO" id="GO:0019854">
    <property type="term" value="P:L-ascorbic acid catabolic process"/>
    <property type="evidence" value="ECO:0007669"/>
    <property type="project" value="TreeGrafter"/>
</dbReference>
<dbReference type="CDD" id="cd04726">
    <property type="entry name" value="KGPDC_HPS"/>
    <property type="match status" value="1"/>
</dbReference>
<dbReference type="FunFam" id="3.30.230.60:FF:000001">
    <property type="entry name" value="5,6,7,8-tetrahydromethanopterin hydro-lyase"/>
    <property type="match status" value="1"/>
</dbReference>
<dbReference type="Gene3D" id="3.20.20.70">
    <property type="entry name" value="Aldolase class I"/>
    <property type="match status" value="1"/>
</dbReference>
<dbReference type="Gene3D" id="3.30.230.60">
    <property type="entry name" value="Formaldehyde-activating enzyme"/>
    <property type="match status" value="1"/>
</dbReference>
<dbReference type="HAMAP" id="MF_01268">
    <property type="entry name" value="Fae_Hps"/>
    <property type="match status" value="1"/>
</dbReference>
<dbReference type="InterPro" id="IPR013785">
    <property type="entry name" value="Aldolase_TIM"/>
</dbReference>
<dbReference type="InterPro" id="IPR020868">
    <property type="entry name" value="Fae/Hps"/>
</dbReference>
<dbReference type="InterPro" id="IPR014826">
    <property type="entry name" value="HCHO-activating_enzyme"/>
</dbReference>
<dbReference type="InterPro" id="IPR037075">
    <property type="entry name" value="HCHO-activating_enzyme_sf"/>
</dbReference>
<dbReference type="InterPro" id="IPR041710">
    <property type="entry name" value="HPS/KGPDC"/>
</dbReference>
<dbReference type="InterPro" id="IPR001754">
    <property type="entry name" value="OMPdeCOase_dom"/>
</dbReference>
<dbReference type="InterPro" id="IPR020568">
    <property type="entry name" value="Ribosomal_Su5_D2-typ_SF"/>
</dbReference>
<dbReference type="InterPro" id="IPR011060">
    <property type="entry name" value="RibuloseP-bd_barrel"/>
</dbReference>
<dbReference type="NCBIfam" id="TIGR03126">
    <property type="entry name" value="one_C_fae"/>
    <property type="match status" value="1"/>
</dbReference>
<dbReference type="NCBIfam" id="NF009833">
    <property type="entry name" value="PRK13307.1"/>
    <property type="match status" value="1"/>
</dbReference>
<dbReference type="PANTHER" id="PTHR35039">
    <property type="entry name" value="3-KETO-L-GULONATE-6-PHOSPHATE DECARBOXYLASE SGBH-RELATED"/>
    <property type="match status" value="1"/>
</dbReference>
<dbReference type="PANTHER" id="PTHR35039:SF3">
    <property type="entry name" value="3-KETO-L-GULONATE-6-PHOSPHATE DECARBOXYLASE SGBH-RELATED"/>
    <property type="match status" value="1"/>
</dbReference>
<dbReference type="Pfam" id="PF08714">
    <property type="entry name" value="Fae"/>
    <property type="match status" value="1"/>
</dbReference>
<dbReference type="Pfam" id="PF00215">
    <property type="entry name" value="OMPdecase"/>
    <property type="match status" value="1"/>
</dbReference>
<dbReference type="SMART" id="SM00934">
    <property type="entry name" value="OMPdecase"/>
    <property type="match status" value="1"/>
</dbReference>
<dbReference type="SUPFAM" id="SSF54211">
    <property type="entry name" value="Ribosomal protein S5 domain 2-like"/>
    <property type="match status" value="1"/>
</dbReference>
<dbReference type="SUPFAM" id="SSF51366">
    <property type="entry name" value="Ribulose-phoshate binding barrel"/>
    <property type="match status" value="1"/>
</dbReference>
<gene>
    <name evidence="1" type="primary">fae-hps</name>
    <name type="ordered locus">Mhun_1628</name>
</gene>
<keyword id="KW-0119">Carbohydrate metabolism</keyword>
<keyword id="KW-0456">Lyase</keyword>
<keyword id="KW-0511">Multifunctional enzyme</keyword>
<keyword id="KW-1185">Reference proteome</keyword>
<evidence type="ECO:0000255" key="1">
    <source>
        <dbReference type="HAMAP-Rule" id="MF_01268"/>
    </source>
</evidence>
<sequence length="393" mass="42230">MYLIGEALIGEGSELAHVDLIVGDKNGPVGMAFANALSQLSAGHTPLLAVVRPNLLTKPATVVIPKVTLKNEGQVNQMFGPVQAAVAKAVADAVEEGLFGDININDICILASAFLHPSAKDYNRIYRYNYGATKLAISRAFEEFPDEKTLIHEKDRAAHAVMGFKVPRLWDPPYLQVALDIVDLGKLRSVLSSLPENDHLIIEAGTPLIKKFGLNVISEIRAVKPNAFIVADMKILDTGNLEARMAADSSADAVVMSGLAPASTIEKAITEARKTGIYSVIDMLNVEDPVGLIASLKVKPDIVELHRAIDAEHTSHAWGNIGDIKKAAGGKLLVATAGGIRVPVVKEALKTGADILVVGRAITASKDVRHAAEEFLEQLNKEEIDQFRIMTDF</sequence>
<proteinExistence type="inferred from homology"/>
<name>FAEHP_METHJ</name>
<feature type="chain" id="PRO_0000236088" description="Bifunctional enzyme Fae/Hps">
    <location>
        <begin position="1"/>
        <end position="393"/>
    </location>
</feature>
<feature type="region of interest" description="Formaldehyde-activating enzyme" evidence="1">
    <location>
        <begin position="1"/>
        <end position="161"/>
    </location>
</feature>
<feature type="region of interest" description="3-hexulose-6-phosphate synthase" evidence="1">
    <location>
        <begin position="162"/>
        <end position="393"/>
    </location>
</feature>
<feature type="active site" description="Proton donor" evidence="1">
    <location>
        <position position="17"/>
    </location>
</feature>
<feature type="binding site" evidence="1">
    <location>
        <position position="19"/>
    </location>
    <ligand>
        <name>substrate</name>
    </ligand>
</feature>
<feature type="binding site" evidence="1">
    <location>
        <position position="48"/>
    </location>
    <ligand>
        <name>substrate</name>
    </ligand>
</feature>
<feature type="binding site" evidence="1">
    <location>
        <position position="66"/>
    </location>
    <ligand>
        <name>substrate</name>
    </ligand>
</feature>
<feature type="binding site" evidence="1">
    <location>
        <position position="68"/>
    </location>
    <ligand>
        <name>substrate</name>
    </ligand>
</feature>
<feature type="binding site" evidence="1">
    <location>
        <position position="83"/>
    </location>
    <ligand>
        <name>substrate</name>
    </ligand>
</feature>
<accession>Q2FQ74</accession>
<protein>
    <recommendedName>
        <fullName evidence="1">Bifunctional enzyme Fae/Hps</fullName>
    </recommendedName>
    <domain>
        <recommendedName>
            <fullName evidence="1">5,6,7,8-tetrahydromethanopterin hydro-lyase</fullName>
            <ecNumber evidence="1">4.2.1.147</ecNumber>
        </recommendedName>
        <alternativeName>
            <fullName evidence="1">Formaldehyde-activating enzyme</fullName>
            <shortName evidence="1">Fae</shortName>
        </alternativeName>
    </domain>
    <domain>
        <recommendedName>
            <fullName evidence="1">3-hexulose-6-phosphate synthase</fullName>
            <shortName evidence="1">HPS</shortName>
            <ecNumber evidence="1">4.1.2.43</ecNumber>
        </recommendedName>
        <alternativeName>
            <fullName evidence="1">D-arabino-3-hexulose-6-phosphate formaldehyde lyase</fullName>
        </alternativeName>
    </domain>
</protein>
<comment type="function">
    <text evidence="1">Catalyzes the condensation of formaldehyde with tetrahydromethanopterin (H(4)MPT) to 5,10-methylenetetrahydromethanopterin.</text>
</comment>
<comment type="function">
    <text evidence="1">Catalyzes the reversible formation of ribulose-5-phosphate and formaldehyde from 3-hexulose-6-phosphate.</text>
</comment>
<comment type="catalytic activity">
    <reaction evidence="1">
        <text>5,6,7,8-tetrahydromethanopterin + formaldehyde = 5,10-methylenetetrahydromethanopterin + H2O</text>
        <dbReference type="Rhea" id="RHEA:24678"/>
        <dbReference type="ChEBI" id="CHEBI:15377"/>
        <dbReference type="ChEBI" id="CHEBI:16842"/>
        <dbReference type="ChEBI" id="CHEBI:57818"/>
        <dbReference type="ChEBI" id="CHEBI:58103"/>
        <dbReference type="EC" id="4.2.1.147"/>
    </reaction>
</comment>
<comment type="catalytic activity">
    <reaction evidence="1">
        <text>D-ribulose 5-phosphate + formaldehyde = D-arabino-hex-3-ulose 6-phosphate</text>
        <dbReference type="Rhea" id="RHEA:25201"/>
        <dbReference type="ChEBI" id="CHEBI:16842"/>
        <dbReference type="ChEBI" id="CHEBI:58121"/>
        <dbReference type="ChEBI" id="CHEBI:58542"/>
        <dbReference type="EC" id="4.1.2.43"/>
    </reaction>
</comment>
<comment type="pathway">
    <text evidence="1">Carbohydrate biosynthesis; D-ribose 5-phosphate biosynthesis.</text>
</comment>
<comment type="similarity">
    <text evidence="1">In the N-terminal section; belongs to the formaldehyde-activating enzyme family.</text>
</comment>
<comment type="similarity">
    <text evidence="1">In the C-terminal section; belongs to the HPS/KGPDC family. HPS subfamily.</text>
</comment>
<organism>
    <name type="scientific">Methanospirillum hungatei JF-1 (strain ATCC 27890 / DSM 864 / NBRC 100397 / JF-1)</name>
    <dbReference type="NCBI Taxonomy" id="323259"/>
    <lineage>
        <taxon>Archaea</taxon>
        <taxon>Methanobacteriati</taxon>
        <taxon>Methanobacteriota</taxon>
        <taxon>Stenosarchaea group</taxon>
        <taxon>Methanomicrobia</taxon>
        <taxon>Methanomicrobiales</taxon>
        <taxon>Methanospirillaceae</taxon>
        <taxon>Methanospirillum</taxon>
    </lineage>
</organism>